<name>GUAC_BACHK</name>
<dbReference type="EC" id="1.7.1.7" evidence="1"/>
<dbReference type="EMBL" id="AE017355">
    <property type="protein sequence ID" value="AAT62666.1"/>
    <property type="molecule type" value="Genomic_DNA"/>
</dbReference>
<dbReference type="RefSeq" id="WP_000432434.1">
    <property type="nucleotide sequence ID" value="NC_005957.1"/>
</dbReference>
<dbReference type="RefSeq" id="YP_039446.1">
    <property type="nucleotide sequence ID" value="NC_005957.1"/>
</dbReference>
<dbReference type="SMR" id="Q6HAI0"/>
<dbReference type="GeneID" id="93005671"/>
<dbReference type="KEGG" id="btk:BT9727_5137"/>
<dbReference type="PATRIC" id="fig|281309.8.peg.5462"/>
<dbReference type="HOGENOM" id="CLU_022552_5_0_9"/>
<dbReference type="Proteomes" id="UP000001301">
    <property type="component" value="Chromosome"/>
</dbReference>
<dbReference type="GO" id="GO:0005829">
    <property type="term" value="C:cytosol"/>
    <property type="evidence" value="ECO:0007669"/>
    <property type="project" value="TreeGrafter"/>
</dbReference>
<dbReference type="GO" id="GO:1902560">
    <property type="term" value="C:GMP reductase complex"/>
    <property type="evidence" value="ECO:0007669"/>
    <property type="project" value="InterPro"/>
</dbReference>
<dbReference type="GO" id="GO:0003920">
    <property type="term" value="F:GMP reductase activity"/>
    <property type="evidence" value="ECO:0007669"/>
    <property type="project" value="UniProtKB-UniRule"/>
</dbReference>
<dbReference type="GO" id="GO:0016627">
    <property type="term" value="F:oxidoreductase activity, acting on the CH-CH group of donors"/>
    <property type="evidence" value="ECO:0007669"/>
    <property type="project" value="InterPro"/>
</dbReference>
<dbReference type="GO" id="GO:0006207">
    <property type="term" value="P:'de novo' pyrimidine nucleobase biosynthetic process"/>
    <property type="evidence" value="ECO:0007669"/>
    <property type="project" value="InterPro"/>
</dbReference>
<dbReference type="GO" id="GO:0006163">
    <property type="term" value="P:purine nucleotide metabolic process"/>
    <property type="evidence" value="ECO:0007669"/>
    <property type="project" value="UniProtKB-UniRule"/>
</dbReference>
<dbReference type="CDD" id="cd00381">
    <property type="entry name" value="IMPDH"/>
    <property type="match status" value="1"/>
</dbReference>
<dbReference type="FunFam" id="3.20.20.70:FF:000079">
    <property type="entry name" value="GMP reductase"/>
    <property type="match status" value="1"/>
</dbReference>
<dbReference type="Gene3D" id="3.20.20.70">
    <property type="entry name" value="Aldolase class I"/>
    <property type="match status" value="1"/>
</dbReference>
<dbReference type="HAMAP" id="MF_01511">
    <property type="entry name" value="GMP_reduct_type2"/>
    <property type="match status" value="1"/>
</dbReference>
<dbReference type="InterPro" id="IPR013785">
    <property type="entry name" value="Aldolase_TIM"/>
</dbReference>
<dbReference type="InterPro" id="IPR001295">
    <property type="entry name" value="Dihydroorotate_DH_CS"/>
</dbReference>
<dbReference type="InterPro" id="IPR050139">
    <property type="entry name" value="GMP_reductase"/>
</dbReference>
<dbReference type="InterPro" id="IPR005994">
    <property type="entry name" value="GuaC_type_2"/>
</dbReference>
<dbReference type="InterPro" id="IPR015875">
    <property type="entry name" value="IMP_DH/GMP_Rdtase_CS"/>
</dbReference>
<dbReference type="InterPro" id="IPR001093">
    <property type="entry name" value="IMP_DH_GMPRt"/>
</dbReference>
<dbReference type="NCBIfam" id="TIGR01306">
    <property type="entry name" value="GMP_reduct_2"/>
    <property type="match status" value="1"/>
</dbReference>
<dbReference type="NCBIfam" id="NF003966">
    <property type="entry name" value="PRK05458.1"/>
    <property type="match status" value="1"/>
</dbReference>
<dbReference type="PANTHER" id="PTHR43170">
    <property type="entry name" value="GMP REDUCTASE"/>
    <property type="match status" value="1"/>
</dbReference>
<dbReference type="PANTHER" id="PTHR43170:SF5">
    <property type="entry name" value="GMP REDUCTASE"/>
    <property type="match status" value="1"/>
</dbReference>
<dbReference type="Pfam" id="PF00478">
    <property type="entry name" value="IMPDH"/>
    <property type="match status" value="1"/>
</dbReference>
<dbReference type="PIRSF" id="PIRSF036500">
    <property type="entry name" value="GMP_red_Firmic"/>
    <property type="match status" value="1"/>
</dbReference>
<dbReference type="SMART" id="SM01240">
    <property type="entry name" value="IMPDH"/>
    <property type="match status" value="1"/>
</dbReference>
<dbReference type="SUPFAM" id="SSF51412">
    <property type="entry name" value="Inosine monophosphate dehydrogenase (IMPDH)"/>
    <property type="match status" value="1"/>
</dbReference>
<dbReference type="PROSITE" id="PS00487">
    <property type="entry name" value="IMP_DH_GMP_RED"/>
    <property type="match status" value="1"/>
</dbReference>
<accession>Q6HAI0</accession>
<keyword id="KW-0521">NADP</keyword>
<keyword id="KW-0560">Oxidoreductase</keyword>
<reference key="1">
    <citation type="journal article" date="2006" name="J. Bacteriol.">
        <title>Pathogenomic sequence analysis of Bacillus cereus and Bacillus thuringiensis isolates closely related to Bacillus anthracis.</title>
        <authorList>
            <person name="Han C.S."/>
            <person name="Xie G."/>
            <person name="Challacombe J.F."/>
            <person name="Altherr M.R."/>
            <person name="Bhotika S.S."/>
            <person name="Bruce D."/>
            <person name="Campbell C.S."/>
            <person name="Campbell M.L."/>
            <person name="Chen J."/>
            <person name="Chertkov O."/>
            <person name="Cleland C."/>
            <person name="Dimitrijevic M."/>
            <person name="Doggett N.A."/>
            <person name="Fawcett J.J."/>
            <person name="Glavina T."/>
            <person name="Goodwin L.A."/>
            <person name="Hill K.K."/>
            <person name="Hitchcock P."/>
            <person name="Jackson P.J."/>
            <person name="Keim P."/>
            <person name="Kewalramani A.R."/>
            <person name="Longmire J."/>
            <person name="Lucas S."/>
            <person name="Malfatti S."/>
            <person name="McMurry K."/>
            <person name="Meincke L.J."/>
            <person name="Misra M."/>
            <person name="Moseman B.L."/>
            <person name="Mundt M."/>
            <person name="Munk A.C."/>
            <person name="Okinaka R.T."/>
            <person name="Parson-Quintana B."/>
            <person name="Reilly L.P."/>
            <person name="Richardson P."/>
            <person name="Robinson D.L."/>
            <person name="Rubin E."/>
            <person name="Saunders E."/>
            <person name="Tapia R."/>
            <person name="Tesmer J.G."/>
            <person name="Thayer N."/>
            <person name="Thompson L.S."/>
            <person name="Tice H."/>
            <person name="Ticknor L.O."/>
            <person name="Wills P.L."/>
            <person name="Brettin T.S."/>
            <person name="Gilna P."/>
        </authorList>
    </citation>
    <scope>NUCLEOTIDE SEQUENCE [LARGE SCALE GENOMIC DNA]</scope>
    <source>
        <strain>97-27</strain>
    </source>
</reference>
<gene>
    <name evidence="1" type="primary">guaC</name>
    <name type="ordered locus">BT9727_5137</name>
</gene>
<evidence type="ECO:0000255" key="1">
    <source>
        <dbReference type="HAMAP-Rule" id="MF_01511"/>
    </source>
</evidence>
<sequence length="327" mass="36171">MENVFDYEDIQLIPAKCIVNSRSECDTTVTLGKHKFKLPVVPANMQTIIDERIATYLAENNYFYIMHRFQPEKRISFIRDMQSRGLIASISVGVKEDEYEFVQQLAAEHLTPEYITIDIAHGHSNAVINMIQHIKKHLPESFVIAGNVGTPEAVRELENAGADATKVGIGPGKVCITKIKTGFGTGGWQLAALRWCAKAASKPIIADGGIRTHGDVAKSIRFGATMVMIGSLFAGHEESPGETIEKDGKLYKEYFGSASEFQKGEKKNVEGKKMFVEHKGSLEDTLIEMEQDLQSSISYAGGTKLDSIRTVDYVVVKNSIFNGDKVY</sequence>
<protein>
    <recommendedName>
        <fullName evidence="1">GMP reductase</fullName>
        <ecNumber evidence="1">1.7.1.7</ecNumber>
    </recommendedName>
    <alternativeName>
        <fullName evidence="1">Guanosine 5'-monophosphate oxidoreductase</fullName>
        <shortName evidence="1">Guanosine monophosphate reductase</shortName>
    </alternativeName>
</protein>
<comment type="function">
    <text evidence="1">Catalyzes the irreversible NADPH-dependent deamination of GMP to IMP. It functions in the conversion of nucleobase, nucleoside and nucleotide derivatives of G to A nucleotides, and in maintaining the intracellular balance of A and G nucleotides.</text>
</comment>
<comment type="catalytic activity">
    <reaction evidence="1">
        <text>IMP + NH4(+) + NADP(+) = GMP + NADPH + 2 H(+)</text>
        <dbReference type="Rhea" id="RHEA:17185"/>
        <dbReference type="ChEBI" id="CHEBI:15378"/>
        <dbReference type="ChEBI" id="CHEBI:28938"/>
        <dbReference type="ChEBI" id="CHEBI:57783"/>
        <dbReference type="ChEBI" id="CHEBI:58053"/>
        <dbReference type="ChEBI" id="CHEBI:58115"/>
        <dbReference type="ChEBI" id="CHEBI:58349"/>
        <dbReference type="EC" id="1.7.1.7"/>
    </reaction>
</comment>
<comment type="similarity">
    <text evidence="1">Belongs to the IMPDH/GMPR family. GuaC type 2 subfamily.</text>
</comment>
<proteinExistence type="inferred from homology"/>
<organism>
    <name type="scientific">Bacillus thuringiensis subsp. konkukian (strain 97-27)</name>
    <dbReference type="NCBI Taxonomy" id="281309"/>
    <lineage>
        <taxon>Bacteria</taxon>
        <taxon>Bacillati</taxon>
        <taxon>Bacillota</taxon>
        <taxon>Bacilli</taxon>
        <taxon>Bacillales</taxon>
        <taxon>Bacillaceae</taxon>
        <taxon>Bacillus</taxon>
        <taxon>Bacillus cereus group</taxon>
    </lineage>
</organism>
<feature type="chain" id="PRO_0000093753" description="GMP reductase">
    <location>
        <begin position="1"/>
        <end position="327"/>
    </location>
</feature>
<feature type="active site" description="Thioimidate intermediate" evidence="1">
    <location>
        <position position="175"/>
    </location>
</feature>
<feature type="binding site" evidence="1">
    <location>
        <begin position="204"/>
        <end position="227"/>
    </location>
    <ligand>
        <name>NADP(+)</name>
        <dbReference type="ChEBI" id="CHEBI:58349"/>
    </ligand>
</feature>